<comment type="function">
    <text evidence="2">Chemoattractant for CD4-dendritic cells, but not for CD4+ dendritic cells, T-cells or B-cells.</text>
</comment>
<comment type="subunit">
    <text evidence="3">Interacts with host XCR1.</text>
</comment>
<comment type="subcellular location">
    <subcellularLocation>
        <location evidence="2">Secreted</location>
    </subcellularLocation>
</comment>
<comment type="PTM">
    <text evidence="2">N-glycosylated and O-glycosylated.</text>
</comment>
<comment type="similarity">
    <text>Belongs to the intercrine gamma family.</text>
</comment>
<evidence type="ECO:0000250" key="1">
    <source>
        <dbReference type="UniProtKB" id="P47992"/>
    </source>
</evidence>
<evidence type="ECO:0000269" key="2">
    <source>
    </source>
</evidence>
<evidence type="ECO:0000303" key="3">
    <source>
    </source>
</evidence>
<accession>K7XWG4</accession>
<feature type="signal peptide" evidence="2">
    <location>
        <begin position="1"/>
        <end position="19"/>
    </location>
</feature>
<feature type="chain" id="PRO_0000434598" description="Viral Lymphotactin">
    <location>
        <begin position="20"/>
        <end position="115"/>
    </location>
</feature>
<feature type="disulfide bond" evidence="1">
    <location>
        <begin position="30"/>
        <end position="67"/>
    </location>
</feature>
<sequence>MRLLTILALCCVAIWVVESIGIEVLHETICVSLRTQRIPIQKIKTYTIKEGAMRAVIFVTKRGLRICADPDAGWTKAAITTLDKKNKKNKQKFNTTTVIPTQVPVSTNETTTVYG</sequence>
<proteinExistence type="evidence at protein level"/>
<name>VXCL1_RCMVE</name>
<organism>
    <name type="scientific">Rat cytomegalovirus (isolate England)</name>
    <name type="common">RCMV-E</name>
    <name type="synonym">Murid herpesvirus 8</name>
    <dbReference type="NCBI Taxonomy" id="1261657"/>
    <lineage>
        <taxon>Viruses</taxon>
        <taxon>Duplodnaviria</taxon>
        <taxon>Heunggongvirae</taxon>
        <taxon>Peploviricota</taxon>
        <taxon>Herviviricetes</taxon>
        <taxon>Herpesvirales</taxon>
        <taxon>Orthoherpesviridae</taxon>
        <taxon>Betaherpesvirinae</taxon>
        <taxon>Muromegalovirus</taxon>
        <taxon>Muromegalovirus muridbeta8</taxon>
    </lineage>
</organism>
<keyword id="KW-0145">Chemotaxis</keyword>
<keyword id="KW-0202">Cytokine</keyword>
<keyword id="KW-1015">Disulfide bond</keyword>
<keyword id="KW-0325">Glycoprotein</keyword>
<keyword id="KW-0945">Host-virus interaction</keyword>
<keyword id="KW-1185">Reference proteome</keyword>
<keyword id="KW-0964">Secreted</keyword>
<keyword id="KW-0732">Signal</keyword>
<organismHost>
    <name type="scientific">Rattus norvegicus</name>
    <name type="common">Rat</name>
    <dbReference type="NCBI Taxonomy" id="10116"/>
</organismHost>
<reference key="1">
    <citation type="journal article" date="2012" name="J. Virol.">
        <title>Complete genome sequence of the english isolate of rat cytomegalovirus (Murid herpesvirus 8).</title>
        <authorList>
            <person name="Ettinger J."/>
            <person name="Geyer H."/>
            <person name="Nitsche A."/>
            <person name="Zimmermann A."/>
            <person name="Brune W."/>
            <person name="Sandford G.R."/>
            <person name="Hayward G.S."/>
            <person name="Voigt S."/>
        </authorList>
    </citation>
    <scope>NUCLEOTIDE SEQUENCE [GENOMIC DNA]</scope>
    <source>
        <strain>England</strain>
    </source>
</reference>
<reference key="2">
    <citation type="journal article" date="2015" name="J. Gen. Virol.">
        <title>The English isolate and a newly identified Berlin isolate of Rat Cytomegalovirus (RCMV) share similarities with but separate as an anciently diverged clade from Mouse CMV and the Maastricht isolate of RCMV.</title>
        <authorList>
            <person name="Geyer H."/>
            <person name="Ettinger J."/>
            <person name="Moller L."/>
            <person name="Schmolz E."/>
            <person name="Nitsche A."/>
            <person name="Brune W."/>
            <person name="Heaggans S."/>
            <person name="Sandford G."/>
            <person name="Hayward G.S."/>
            <person name="Voigt S."/>
        </authorList>
    </citation>
    <scope>NUCLEOTIDE SEQUENCE [GENOMIC DNA]</scope>
    <source>
        <strain>England</strain>
    </source>
</reference>
<reference key="3">
    <citation type="journal article" date="2014" name="J. Virol.">
        <title>Cytomegalovirus expresses the chemokine homologue vXCL1 capable of attracting XCR1+ CD4- dendritic cells.</title>
        <authorList>
            <person name="Geyer H."/>
            <person name="Hartung E."/>
            <person name="Mages H.W."/>
            <person name="Weise C."/>
            <person name="Beluzic R."/>
            <person name="Vugrek O."/>
            <person name="Jonjic S."/>
            <person name="Kroczek R.A."/>
            <person name="Voigt S."/>
        </authorList>
    </citation>
    <scope>FUNCTION</scope>
    <scope>SUBCELLULAR LOCATION</scope>
    <scope>INTERACTION WITH HOST XCR1</scope>
    <source>
        <strain>England</strain>
    </source>
</reference>
<dbReference type="EMBL" id="JX867617">
    <property type="protein sequence ID" value="AFX83458.1"/>
    <property type="molecule type" value="Genomic_DNA"/>
</dbReference>
<dbReference type="RefSeq" id="YP_007016541.1">
    <property type="nucleotide sequence ID" value="NC_019559.1"/>
</dbReference>
<dbReference type="SMR" id="K7XWG4"/>
<dbReference type="GeneID" id="14039064"/>
<dbReference type="KEGG" id="vg:14039064"/>
<dbReference type="Proteomes" id="UP000127637">
    <property type="component" value="Genome"/>
</dbReference>
<dbReference type="GO" id="GO:0005615">
    <property type="term" value="C:extracellular space"/>
    <property type="evidence" value="ECO:0007669"/>
    <property type="project" value="UniProtKB-KW"/>
</dbReference>
<dbReference type="GO" id="GO:0048020">
    <property type="term" value="F:CCR chemokine receptor binding"/>
    <property type="evidence" value="ECO:0007669"/>
    <property type="project" value="TreeGrafter"/>
</dbReference>
<dbReference type="GO" id="GO:0008009">
    <property type="term" value="F:chemokine activity"/>
    <property type="evidence" value="ECO:0007669"/>
    <property type="project" value="InterPro"/>
</dbReference>
<dbReference type="GO" id="GO:0061844">
    <property type="term" value="P:antimicrobial humoral immune response mediated by antimicrobial peptide"/>
    <property type="evidence" value="ECO:0007669"/>
    <property type="project" value="TreeGrafter"/>
</dbReference>
<dbReference type="GO" id="GO:0070098">
    <property type="term" value="P:chemokine-mediated signaling pathway"/>
    <property type="evidence" value="ECO:0007669"/>
    <property type="project" value="TreeGrafter"/>
</dbReference>
<dbReference type="GO" id="GO:0030335">
    <property type="term" value="P:positive regulation of cell migration"/>
    <property type="evidence" value="ECO:0007669"/>
    <property type="project" value="TreeGrafter"/>
</dbReference>
<dbReference type="FunFam" id="2.40.50.40:FF:000023">
    <property type="entry name" value="Lymphotactin isoform X1"/>
    <property type="match status" value="1"/>
</dbReference>
<dbReference type="Gene3D" id="2.40.50.40">
    <property type="match status" value="1"/>
</dbReference>
<dbReference type="InterPro" id="IPR039809">
    <property type="entry name" value="Chemokine_b/g/d"/>
</dbReference>
<dbReference type="InterPro" id="IPR001811">
    <property type="entry name" value="Chemokine_IL8-like_dom"/>
</dbReference>
<dbReference type="InterPro" id="IPR008105">
    <property type="entry name" value="Chemokine_XCL1/XCL2"/>
</dbReference>
<dbReference type="InterPro" id="IPR036048">
    <property type="entry name" value="Interleukin_8-like_sf"/>
</dbReference>
<dbReference type="PANTHER" id="PTHR12015:SF101">
    <property type="entry name" value="CYTOKINE SCM-1 BETA-RELATED"/>
    <property type="match status" value="1"/>
</dbReference>
<dbReference type="PANTHER" id="PTHR12015">
    <property type="entry name" value="SMALL INDUCIBLE CYTOKINE A"/>
    <property type="match status" value="1"/>
</dbReference>
<dbReference type="Pfam" id="PF00048">
    <property type="entry name" value="IL8"/>
    <property type="match status" value="1"/>
</dbReference>
<dbReference type="PRINTS" id="PR01731">
    <property type="entry name" value="LYMPHOTACTIN"/>
</dbReference>
<dbReference type="SMART" id="SM00199">
    <property type="entry name" value="SCY"/>
    <property type="match status" value="1"/>
</dbReference>
<dbReference type="SUPFAM" id="SSF54117">
    <property type="entry name" value="Interleukin 8-like chemokines"/>
    <property type="match status" value="1"/>
</dbReference>
<protein>
    <recommendedName>
        <fullName>Viral Lymphotactin</fullName>
    </recommendedName>
    <alternativeName>
        <fullName>Viral XCL1</fullName>
        <shortName>vSCL1</shortName>
    </alternativeName>
</protein>
<gene>
    <name type="primary">vXCL1</name>
    <name type="ORF">e156.5</name>
</gene>